<feature type="chain" id="PRO_0000182399" description="Stathmin-2">
    <location>
        <begin position="1"/>
        <end position="179"/>
    </location>
</feature>
<feature type="domain" description="SLD" evidence="3">
    <location>
        <begin position="38"/>
        <end position="179"/>
    </location>
</feature>
<feature type="region of interest" description="Membrane attachment" evidence="2">
    <location>
        <begin position="1"/>
        <end position="26"/>
    </location>
</feature>
<feature type="region of interest" description="Regulatory/phosphorylation domain" evidence="2">
    <location>
        <begin position="39"/>
        <end position="96"/>
    </location>
</feature>
<feature type="coiled-coil region" evidence="2">
    <location>
        <begin position="74"/>
        <end position="179"/>
    </location>
</feature>
<feature type="modified residue" description="Phosphoserine" evidence="2">
    <location>
        <position position="16"/>
    </location>
</feature>
<feature type="modified residue" description="Phosphoserine" evidence="2">
    <location>
        <position position="50"/>
    </location>
</feature>
<feature type="modified residue" description="Phosphoserine" evidence="2">
    <location>
        <position position="62"/>
    </location>
</feature>
<feature type="modified residue" description="Phosphoserine" evidence="2">
    <location>
        <position position="73"/>
    </location>
</feature>
<feature type="modified residue" description="Phosphoserine" evidence="2">
    <location>
        <position position="80"/>
    </location>
</feature>
<feature type="modified residue" description="Phosphoserine" evidence="2">
    <location>
        <position position="97"/>
    </location>
</feature>
<evidence type="ECO:0000250" key="1"/>
<evidence type="ECO:0000255" key="2"/>
<evidence type="ECO:0000255" key="3">
    <source>
        <dbReference type="PROSITE-ProRule" id="PRU00998"/>
    </source>
</evidence>
<evidence type="ECO:0000305" key="4"/>
<name>STMN2_CHICK</name>
<sequence length="179" mass="20882">MAKTAMAYKEKMKELSMLSLICSCFYPEPRNMNIYKYDDMEVKQINKRASGQAFELILKPPSPVSEAPRTLASPKKKELSLEEIQKKLEAAEERRKSQEAQVLKHLAEKREHEREVLQKALEENNNFSKMAEEKLILKMEQIKENREANLAALIERLQEKERHAAEVRRNKELQVELSG</sequence>
<gene>
    <name type="primary">STMN2</name>
    <name type="synonym">SCG10</name>
</gene>
<reference key="1">
    <citation type="journal article" date="1996" name="Neuroscience">
        <title>Differential induction and intracellular localization of SCG10 messenger RNA is associated with neuronal differentiation.</title>
        <authorList>
            <person name="Hannan A.J."/>
            <person name="Henke R.C."/>
            <person name="Weinberger R.P."/>
            <person name="Sentry J.W."/>
            <person name="Jeffrey P.L."/>
        </authorList>
    </citation>
    <scope>NUCLEOTIDE SEQUENCE [MRNA]</scope>
    <source>
        <strain>White leghorn</strain>
        <tissue>Cerebellum</tissue>
    </source>
</reference>
<keyword id="KW-0966">Cell projection</keyword>
<keyword id="KW-0175">Coiled coil</keyword>
<keyword id="KW-0963">Cytoplasm</keyword>
<keyword id="KW-0472">Membrane</keyword>
<keyword id="KW-0597">Phosphoprotein</keyword>
<keyword id="KW-1185">Reference proteome</keyword>
<accession>Q90987</accession>
<organism>
    <name type="scientific">Gallus gallus</name>
    <name type="common">Chicken</name>
    <dbReference type="NCBI Taxonomy" id="9031"/>
    <lineage>
        <taxon>Eukaryota</taxon>
        <taxon>Metazoa</taxon>
        <taxon>Chordata</taxon>
        <taxon>Craniata</taxon>
        <taxon>Vertebrata</taxon>
        <taxon>Euteleostomi</taxon>
        <taxon>Archelosauria</taxon>
        <taxon>Archosauria</taxon>
        <taxon>Dinosauria</taxon>
        <taxon>Saurischia</taxon>
        <taxon>Theropoda</taxon>
        <taxon>Coelurosauria</taxon>
        <taxon>Aves</taxon>
        <taxon>Neognathae</taxon>
        <taxon>Galloanserae</taxon>
        <taxon>Galliformes</taxon>
        <taxon>Phasianidae</taxon>
        <taxon>Phasianinae</taxon>
        <taxon>Gallus</taxon>
    </lineage>
</organism>
<dbReference type="EMBL" id="L14938">
    <property type="protein sequence ID" value="AAB19119.1"/>
    <property type="molecule type" value="mRNA"/>
</dbReference>
<dbReference type="RefSeq" id="NP_990512.1">
    <property type="nucleotide sequence ID" value="NM_205181.2"/>
</dbReference>
<dbReference type="SMR" id="Q90987"/>
<dbReference type="FunCoup" id="Q90987">
    <property type="interactions" value="2"/>
</dbReference>
<dbReference type="STRING" id="9031.ENSGALP00000055841"/>
<dbReference type="PaxDb" id="9031-ENSGALP00000025330"/>
<dbReference type="Ensembl" id="ENSGALT00010007781.1">
    <property type="protein sequence ID" value="ENSGALP00010004672.1"/>
    <property type="gene ID" value="ENSGALG00010003323.1"/>
</dbReference>
<dbReference type="GeneID" id="396095"/>
<dbReference type="KEGG" id="gga:396095"/>
<dbReference type="CTD" id="11075"/>
<dbReference type="VEuPathDB" id="HostDB:geneid_396095"/>
<dbReference type="eggNOG" id="ENOG502RENQ">
    <property type="taxonomic scope" value="Eukaryota"/>
</dbReference>
<dbReference type="GeneTree" id="ENSGT01030000234597"/>
<dbReference type="InParanoid" id="Q90987"/>
<dbReference type="OMA" id="CFYSEPH"/>
<dbReference type="OrthoDB" id="5986631at2759"/>
<dbReference type="PhylomeDB" id="Q90987"/>
<dbReference type="TreeFam" id="TF326935"/>
<dbReference type="Reactome" id="R-GGA-9696273">
    <property type="pathway name" value="RND1 GTPase cycle"/>
</dbReference>
<dbReference type="PRO" id="PR:Q90987"/>
<dbReference type="Proteomes" id="UP000000539">
    <property type="component" value="Chromosome 2"/>
</dbReference>
<dbReference type="Bgee" id="ENSGALG00000039690">
    <property type="expression patterns" value="Expressed in brain and 11 other cell types or tissues"/>
</dbReference>
<dbReference type="GO" id="GO:0005737">
    <property type="term" value="C:cytoplasm"/>
    <property type="evidence" value="ECO:0000250"/>
    <property type="project" value="UniProtKB"/>
</dbReference>
<dbReference type="GO" id="GO:0030426">
    <property type="term" value="C:growth cone"/>
    <property type="evidence" value="ECO:0000250"/>
    <property type="project" value="UniProtKB"/>
</dbReference>
<dbReference type="GO" id="GO:0030027">
    <property type="term" value="C:lamellipodium"/>
    <property type="evidence" value="ECO:0000250"/>
    <property type="project" value="UniProtKB"/>
</dbReference>
<dbReference type="GO" id="GO:0016020">
    <property type="term" value="C:membrane"/>
    <property type="evidence" value="ECO:0007669"/>
    <property type="project" value="UniProtKB-SubCell"/>
</dbReference>
<dbReference type="GO" id="GO:0043005">
    <property type="term" value="C:neuron projection"/>
    <property type="evidence" value="ECO:0000250"/>
    <property type="project" value="UniProtKB"/>
</dbReference>
<dbReference type="GO" id="GO:0043025">
    <property type="term" value="C:neuronal cell body"/>
    <property type="evidence" value="ECO:0000250"/>
    <property type="project" value="UniProtKB"/>
</dbReference>
<dbReference type="GO" id="GO:0048471">
    <property type="term" value="C:perinuclear region of cytoplasm"/>
    <property type="evidence" value="ECO:0007669"/>
    <property type="project" value="UniProtKB-SubCell"/>
</dbReference>
<dbReference type="GO" id="GO:0048306">
    <property type="term" value="F:calcium-dependent protein binding"/>
    <property type="evidence" value="ECO:0007669"/>
    <property type="project" value="Ensembl"/>
</dbReference>
<dbReference type="GO" id="GO:0015631">
    <property type="term" value="F:tubulin binding"/>
    <property type="evidence" value="ECO:0000318"/>
    <property type="project" value="GO_Central"/>
</dbReference>
<dbReference type="GO" id="GO:1990090">
    <property type="term" value="P:cellular response to nerve growth factor stimulus"/>
    <property type="evidence" value="ECO:0000250"/>
    <property type="project" value="UniProtKB"/>
</dbReference>
<dbReference type="GO" id="GO:0007019">
    <property type="term" value="P:microtubule depolymerization"/>
    <property type="evidence" value="ECO:0000318"/>
    <property type="project" value="GO_Central"/>
</dbReference>
<dbReference type="GO" id="GO:0007026">
    <property type="term" value="P:negative regulation of microtubule depolymerization"/>
    <property type="evidence" value="ECO:0007669"/>
    <property type="project" value="Ensembl"/>
</dbReference>
<dbReference type="GO" id="GO:0031115">
    <property type="term" value="P:negative regulation of microtubule polymerization"/>
    <property type="evidence" value="ECO:0000250"/>
    <property type="project" value="UniProtKB"/>
</dbReference>
<dbReference type="GO" id="GO:0010977">
    <property type="term" value="P:negative regulation of neuron projection development"/>
    <property type="evidence" value="ECO:0007669"/>
    <property type="project" value="Ensembl"/>
</dbReference>
<dbReference type="GO" id="GO:0031175">
    <property type="term" value="P:neuron projection development"/>
    <property type="evidence" value="ECO:0000318"/>
    <property type="project" value="GO_Central"/>
</dbReference>
<dbReference type="GO" id="GO:0031117">
    <property type="term" value="P:positive regulation of microtubule depolymerization"/>
    <property type="evidence" value="ECO:0007669"/>
    <property type="project" value="Ensembl"/>
</dbReference>
<dbReference type="GO" id="GO:0010976">
    <property type="term" value="P:positive regulation of neuron projection development"/>
    <property type="evidence" value="ECO:0000250"/>
    <property type="project" value="UniProtKB"/>
</dbReference>
<dbReference type="GO" id="GO:0031110">
    <property type="term" value="P:regulation of microtubule polymerization or depolymerization"/>
    <property type="evidence" value="ECO:0000318"/>
    <property type="project" value="GO_Central"/>
</dbReference>
<dbReference type="Gene3D" id="6.10.280.30">
    <property type="match status" value="1"/>
</dbReference>
<dbReference type="InterPro" id="IPR030514">
    <property type="entry name" value="Stathmin_CS"/>
</dbReference>
<dbReference type="InterPro" id="IPR000956">
    <property type="entry name" value="Stathmin_fam"/>
</dbReference>
<dbReference type="InterPro" id="IPR036002">
    <property type="entry name" value="Stathmin_sf"/>
</dbReference>
<dbReference type="PANTHER" id="PTHR10104">
    <property type="entry name" value="STATHMIN"/>
    <property type="match status" value="1"/>
</dbReference>
<dbReference type="PANTHER" id="PTHR10104:SF18">
    <property type="entry name" value="STATHMIN-2"/>
    <property type="match status" value="1"/>
</dbReference>
<dbReference type="Pfam" id="PF00836">
    <property type="entry name" value="Stathmin"/>
    <property type="match status" value="1"/>
</dbReference>
<dbReference type="PIRSF" id="PIRSF002285">
    <property type="entry name" value="Stathmin"/>
    <property type="match status" value="1"/>
</dbReference>
<dbReference type="PRINTS" id="PR00345">
    <property type="entry name" value="STATHMIN"/>
</dbReference>
<dbReference type="SUPFAM" id="SSF101494">
    <property type="entry name" value="Stathmin"/>
    <property type="match status" value="1"/>
</dbReference>
<dbReference type="PROSITE" id="PS00563">
    <property type="entry name" value="STATHMIN_1"/>
    <property type="match status" value="1"/>
</dbReference>
<dbReference type="PROSITE" id="PS01041">
    <property type="entry name" value="STATHMIN_2"/>
    <property type="match status" value="1"/>
</dbReference>
<dbReference type="PROSITE" id="PS51663">
    <property type="entry name" value="STATHMIN_3"/>
    <property type="match status" value="1"/>
</dbReference>
<proteinExistence type="evidence at transcript level"/>
<comment type="function">
    <text evidence="1">Is a key regulator of neurite extension through regulation of microtubule instabilily.</text>
</comment>
<comment type="subcellular location">
    <subcellularLocation>
        <location evidence="1">Cytoplasm</location>
    </subcellularLocation>
    <subcellularLocation>
        <location evidence="1">Cytoplasm</location>
        <location evidence="1">Perinuclear region</location>
    </subcellularLocation>
    <subcellularLocation>
        <location evidence="1">Cell projection</location>
        <location evidence="1">Growth cone</location>
    </subcellularLocation>
    <subcellularLocation>
        <location evidence="4">Membrane</location>
        <topology evidence="4">Peripheral membrane protein</topology>
        <orientation evidence="4">Cytoplasmic side</orientation>
    </subcellularLocation>
    <subcellularLocation>
        <location evidence="1">Cell projection</location>
        <location evidence="1">Axon</location>
    </subcellularLocation>
    <subcellularLocation>
        <location evidence="1">Cell projection</location>
        <location evidence="1">Lamellipodium</location>
    </subcellularLocation>
    <text evidence="1">Associated with punctate structures in the perinuclear cytoplasm, axons, and growth cones of developing neurons. SCG10 exists in both soluble and membrane-bound forms (By similarity).</text>
</comment>
<comment type="tissue specificity">
    <text>Expression is neuron-specific and found in cerebellum, forebrain, midbrain, tectum and spinal cord.</text>
</comment>
<comment type="similarity">
    <text evidence="4">Belongs to the stathmin family.</text>
</comment>
<protein>
    <recommendedName>
        <fullName>Stathmin-2</fullName>
    </recommendedName>
    <alternativeName>
        <fullName>Superior cervical ganglion-10 protein</fullName>
        <shortName>Protein SCG10</shortName>
    </alternativeName>
</protein>